<keyword id="KW-0067">ATP-binding</keyword>
<keyword id="KW-0963">Cytoplasm</keyword>
<keyword id="KW-0324">Glycolysis</keyword>
<keyword id="KW-0418">Kinase</keyword>
<keyword id="KW-0547">Nucleotide-binding</keyword>
<keyword id="KW-0808">Transferase</keyword>
<evidence type="ECO:0000255" key="1">
    <source>
        <dbReference type="HAMAP-Rule" id="MF_00524"/>
    </source>
</evidence>
<sequence length="342" mass="37102">MTLLLAGDIGGTKTILRLVEVSNSSELHNIYEESYQSGDFPDLVPMVQQFLVKANIPSHPEKACFAIAGPVVNNTAKLTNLVWFLDTERLAQELSIPFISLINDFAAVGYGIFGLSKQDLFTLQAGKHQTEAPIAIIGAGTGLGQGFLIKQGNQYQVFPSEGGHADFAPRNELEFQLLKYLLDKHDIQRVSVERVVSGQGVVAIYQFLRDRKLAIESPEIAQVVRTWEQQAGQAEKTVDPGAAIGKAAVQGSDRLSEQTLQLFIDAYGAEAGNLALKLLPYGGLYIAGGIAPKVLPLIENSNFLLNFSQKGRMRPLLEEIPVHIILNPQVGLIGAALCAARL</sequence>
<organism>
    <name type="scientific">Trichormus variabilis (strain ATCC 29413 / PCC 7937)</name>
    <name type="common">Anabaena variabilis</name>
    <dbReference type="NCBI Taxonomy" id="240292"/>
    <lineage>
        <taxon>Bacteria</taxon>
        <taxon>Bacillati</taxon>
        <taxon>Cyanobacteriota</taxon>
        <taxon>Cyanophyceae</taxon>
        <taxon>Nostocales</taxon>
        <taxon>Nostocaceae</taxon>
        <taxon>Trichormus</taxon>
    </lineage>
</organism>
<feature type="chain" id="PRO_0000268766" description="Glucokinase">
    <location>
        <begin position="1"/>
        <end position="342"/>
    </location>
</feature>
<feature type="binding site" evidence="1">
    <location>
        <begin position="7"/>
        <end position="12"/>
    </location>
    <ligand>
        <name>ATP</name>
        <dbReference type="ChEBI" id="CHEBI:30616"/>
    </ligand>
</feature>
<name>GLK_TRIV2</name>
<comment type="catalytic activity">
    <reaction evidence="1">
        <text>D-glucose + ATP = D-glucose 6-phosphate + ADP + H(+)</text>
        <dbReference type="Rhea" id="RHEA:17825"/>
        <dbReference type="ChEBI" id="CHEBI:4167"/>
        <dbReference type="ChEBI" id="CHEBI:15378"/>
        <dbReference type="ChEBI" id="CHEBI:30616"/>
        <dbReference type="ChEBI" id="CHEBI:61548"/>
        <dbReference type="ChEBI" id="CHEBI:456216"/>
        <dbReference type="EC" id="2.7.1.2"/>
    </reaction>
</comment>
<comment type="subcellular location">
    <subcellularLocation>
        <location evidence="1">Cytoplasm</location>
    </subcellularLocation>
</comment>
<comment type="similarity">
    <text evidence="1">Belongs to the bacterial glucokinase family.</text>
</comment>
<accession>Q3MEM9</accession>
<proteinExistence type="inferred from homology"/>
<gene>
    <name evidence="1" type="primary">glk</name>
    <name type="ordered locus">Ava_0933</name>
</gene>
<dbReference type="EC" id="2.7.1.2" evidence="1"/>
<dbReference type="EMBL" id="CP000117">
    <property type="protein sequence ID" value="ABA20557.1"/>
    <property type="molecule type" value="Genomic_DNA"/>
</dbReference>
<dbReference type="SMR" id="Q3MEM9"/>
<dbReference type="STRING" id="240292.Ava_0933"/>
<dbReference type="KEGG" id="ava:Ava_0933"/>
<dbReference type="eggNOG" id="COG0837">
    <property type="taxonomic scope" value="Bacteria"/>
</dbReference>
<dbReference type="HOGENOM" id="CLU_042582_0_0_3"/>
<dbReference type="Proteomes" id="UP000002533">
    <property type="component" value="Chromosome"/>
</dbReference>
<dbReference type="GO" id="GO:0005737">
    <property type="term" value="C:cytoplasm"/>
    <property type="evidence" value="ECO:0007669"/>
    <property type="project" value="UniProtKB-SubCell"/>
</dbReference>
<dbReference type="GO" id="GO:0005524">
    <property type="term" value="F:ATP binding"/>
    <property type="evidence" value="ECO:0007669"/>
    <property type="project" value="UniProtKB-UniRule"/>
</dbReference>
<dbReference type="GO" id="GO:0005536">
    <property type="term" value="F:D-glucose binding"/>
    <property type="evidence" value="ECO:0007669"/>
    <property type="project" value="InterPro"/>
</dbReference>
<dbReference type="GO" id="GO:0004340">
    <property type="term" value="F:glucokinase activity"/>
    <property type="evidence" value="ECO:0007669"/>
    <property type="project" value="UniProtKB-UniRule"/>
</dbReference>
<dbReference type="GO" id="GO:0006096">
    <property type="term" value="P:glycolytic process"/>
    <property type="evidence" value="ECO:0007669"/>
    <property type="project" value="UniProtKB-UniRule"/>
</dbReference>
<dbReference type="CDD" id="cd24008">
    <property type="entry name" value="ASKHA_NBD_GLK"/>
    <property type="match status" value="1"/>
</dbReference>
<dbReference type="Gene3D" id="3.30.420.40">
    <property type="match status" value="1"/>
</dbReference>
<dbReference type="Gene3D" id="3.40.367.20">
    <property type="match status" value="1"/>
</dbReference>
<dbReference type="HAMAP" id="MF_00524">
    <property type="entry name" value="Glucokinase"/>
    <property type="match status" value="1"/>
</dbReference>
<dbReference type="InterPro" id="IPR043129">
    <property type="entry name" value="ATPase_NBD"/>
</dbReference>
<dbReference type="InterPro" id="IPR003836">
    <property type="entry name" value="Glucokinase"/>
</dbReference>
<dbReference type="NCBIfam" id="TIGR00749">
    <property type="entry name" value="glk"/>
    <property type="match status" value="1"/>
</dbReference>
<dbReference type="NCBIfam" id="NF001415">
    <property type="entry name" value="PRK00292.1-2"/>
    <property type="match status" value="1"/>
</dbReference>
<dbReference type="PANTHER" id="PTHR47363">
    <property type="entry name" value="GLUCOKINASE"/>
    <property type="match status" value="1"/>
</dbReference>
<dbReference type="PANTHER" id="PTHR47363:SF1">
    <property type="entry name" value="GLUCOKINASE"/>
    <property type="match status" value="1"/>
</dbReference>
<dbReference type="Pfam" id="PF02685">
    <property type="entry name" value="Glucokinase"/>
    <property type="match status" value="1"/>
</dbReference>
<dbReference type="SUPFAM" id="SSF53067">
    <property type="entry name" value="Actin-like ATPase domain"/>
    <property type="match status" value="1"/>
</dbReference>
<reference key="1">
    <citation type="journal article" date="2014" name="Stand. Genomic Sci.">
        <title>Complete genome sequence of Anabaena variabilis ATCC 29413.</title>
        <authorList>
            <person name="Thiel T."/>
            <person name="Pratte B.S."/>
            <person name="Zhong J."/>
            <person name="Goodwin L."/>
            <person name="Copeland A."/>
            <person name="Lucas S."/>
            <person name="Han C."/>
            <person name="Pitluck S."/>
            <person name="Land M.L."/>
            <person name="Kyrpides N.C."/>
            <person name="Woyke T."/>
        </authorList>
    </citation>
    <scope>NUCLEOTIDE SEQUENCE [LARGE SCALE GENOMIC DNA]</scope>
    <source>
        <strain>ATCC 29413 / PCC 7937</strain>
    </source>
</reference>
<protein>
    <recommendedName>
        <fullName evidence="1">Glucokinase</fullName>
        <ecNumber evidence="1">2.7.1.2</ecNumber>
    </recommendedName>
    <alternativeName>
        <fullName evidence="1">Glucose kinase</fullName>
    </alternativeName>
</protein>